<keyword id="KW-0028">Amino-acid biosynthesis</keyword>
<keyword id="KW-0032">Aminotransferase</keyword>
<keyword id="KW-0368">Histidine biosynthesis</keyword>
<keyword id="KW-0663">Pyridoxal phosphate</keyword>
<keyword id="KW-1185">Reference proteome</keyword>
<keyword id="KW-0808">Transferase</keyword>
<comment type="catalytic activity">
    <reaction evidence="1">
        <text>L-histidinol phosphate + 2-oxoglutarate = 3-(imidazol-4-yl)-2-oxopropyl phosphate + L-glutamate</text>
        <dbReference type="Rhea" id="RHEA:23744"/>
        <dbReference type="ChEBI" id="CHEBI:16810"/>
        <dbReference type="ChEBI" id="CHEBI:29985"/>
        <dbReference type="ChEBI" id="CHEBI:57766"/>
        <dbReference type="ChEBI" id="CHEBI:57980"/>
        <dbReference type="EC" id="2.6.1.9"/>
    </reaction>
</comment>
<comment type="cofactor">
    <cofactor evidence="1">
        <name>pyridoxal 5'-phosphate</name>
        <dbReference type="ChEBI" id="CHEBI:597326"/>
    </cofactor>
</comment>
<comment type="pathway">
    <text evidence="1">Amino-acid biosynthesis; L-histidine biosynthesis; L-histidine from 5-phospho-alpha-D-ribose 1-diphosphate: step 7/9.</text>
</comment>
<comment type="subunit">
    <text evidence="1">Homodimer.</text>
</comment>
<comment type="similarity">
    <text evidence="1">Belongs to the class-II pyridoxal-phosphate-dependent aminotransferase family. Histidinol-phosphate aminotransferase subfamily.</text>
</comment>
<reference key="1">
    <citation type="journal article" date="2001" name="Nature">
        <title>Massive gene decay in the leprosy bacillus.</title>
        <authorList>
            <person name="Cole S.T."/>
            <person name="Eiglmeier K."/>
            <person name="Parkhill J."/>
            <person name="James K.D."/>
            <person name="Thomson N.R."/>
            <person name="Wheeler P.R."/>
            <person name="Honore N."/>
            <person name="Garnier T."/>
            <person name="Churcher C.M."/>
            <person name="Harris D.E."/>
            <person name="Mungall K.L."/>
            <person name="Basham D."/>
            <person name="Brown D."/>
            <person name="Chillingworth T."/>
            <person name="Connor R."/>
            <person name="Davies R.M."/>
            <person name="Devlin K."/>
            <person name="Duthoy S."/>
            <person name="Feltwell T."/>
            <person name="Fraser A."/>
            <person name="Hamlin N."/>
            <person name="Holroyd S."/>
            <person name="Hornsby T."/>
            <person name="Jagels K."/>
            <person name="Lacroix C."/>
            <person name="Maclean J."/>
            <person name="Moule S."/>
            <person name="Murphy L.D."/>
            <person name="Oliver K."/>
            <person name="Quail M.A."/>
            <person name="Rajandream M.A."/>
            <person name="Rutherford K.M."/>
            <person name="Rutter S."/>
            <person name="Seeger K."/>
            <person name="Simon S."/>
            <person name="Simmonds M."/>
            <person name="Skelton J."/>
            <person name="Squares R."/>
            <person name="Squares S."/>
            <person name="Stevens K."/>
            <person name="Taylor K."/>
            <person name="Whitehead S."/>
            <person name="Woodward J.R."/>
            <person name="Barrell B.G."/>
        </authorList>
    </citation>
    <scope>NUCLEOTIDE SEQUENCE [LARGE SCALE GENOMIC DNA]</scope>
    <source>
        <strain>TN</strain>
    </source>
</reference>
<gene>
    <name evidence="1" type="primary">hisC</name>
    <name type="ordered locus">ML1258</name>
    <name type="ORF">MLCB1610.21</name>
</gene>
<proteinExistence type="inferred from homology"/>
<accession>Q9X7B8</accession>
<protein>
    <recommendedName>
        <fullName evidence="1">Histidinol-phosphate aminotransferase</fullName>
        <ecNumber evidence="1">2.6.1.9</ecNumber>
    </recommendedName>
    <alternativeName>
        <fullName evidence="1">Imidazole acetol-phosphate transaminase</fullName>
    </alternativeName>
</protein>
<name>HIS8_MYCLE</name>
<evidence type="ECO:0000255" key="1">
    <source>
        <dbReference type="HAMAP-Rule" id="MF_01023"/>
    </source>
</evidence>
<sequence length="377" mass="40351">MNVPEPTLDDLPLRDNLRGKSPYGAMQLLVPVLLNTNENPHPPTKALVDDVVRSVQKVAVDLHRYPDRDAVALRQDLASYLTAQTGIRLGVENIWAANGSNEILQQLLQAFGGPGRSAIGFVPSYSMHPIIADGTHTEWLETVRADDFSLDVEAAVTAVADRKPDVVFIASPNNPSGQSISLADLRRLLDVVPGILIVDEAYGEFSSRPSAVALVGEYPTKIVVTRTTSKAFAFAGGRLGYLIATPALVEAMLLVRLPYHLSSVTQAAARAALRHADDTLGSVAALIAERERVTKSLVHMGFRVIPSDANFVLFGHFSDAAGAWQHYLDTGVLIRDVGIPGYLRATTGLAEENDAFLKASSEIAATELAPATTLGAS</sequence>
<dbReference type="EC" id="2.6.1.9" evidence="1"/>
<dbReference type="EMBL" id="AL049913">
    <property type="protein sequence ID" value="CAB43167.1"/>
    <property type="molecule type" value="Genomic_DNA"/>
</dbReference>
<dbReference type="EMBL" id="AL583921">
    <property type="protein sequence ID" value="CAC31639.1"/>
    <property type="molecule type" value="Genomic_DNA"/>
</dbReference>
<dbReference type="PIR" id="T45247">
    <property type="entry name" value="T45247"/>
</dbReference>
<dbReference type="RefSeq" id="NP_301907.1">
    <property type="nucleotide sequence ID" value="NC_002677.1"/>
</dbReference>
<dbReference type="RefSeq" id="WP_010908228.1">
    <property type="nucleotide sequence ID" value="NC_002677.1"/>
</dbReference>
<dbReference type="SMR" id="Q9X7B8"/>
<dbReference type="STRING" id="272631.gene:17575090"/>
<dbReference type="KEGG" id="mle:ML1258"/>
<dbReference type="PATRIC" id="fig|272631.5.peg.2319"/>
<dbReference type="Leproma" id="ML1258"/>
<dbReference type="eggNOG" id="COG0079">
    <property type="taxonomic scope" value="Bacteria"/>
</dbReference>
<dbReference type="HOGENOM" id="CLU_017584_3_1_11"/>
<dbReference type="OrthoDB" id="9809616at2"/>
<dbReference type="UniPathway" id="UPA00031">
    <property type="reaction ID" value="UER00012"/>
</dbReference>
<dbReference type="Proteomes" id="UP000000806">
    <property type="component" value="Chromosome"/>
</dbReference>
<dbReference type="GO" id="GO:0004400">
    <property type="term" value="F:histidinol-phosphate transaminase activity"/>
    <property type="evidence" value="ECO:0007669"/>
    <property type="project" value="UniProtKB-UniRule"/>
</dbReference>
<dbReference type="GO" id="GO:0030170">
    <property type="term" value="F:pyridoxal phosphate binding"/>
    <property type="evidence" value="ECO:0007669"/>
    <property type="project" value="InterPro"/>
</dbReference>
<dbReference type="GO" id="GO:0000105">
    <property type="term" value="P:L-histidine biosynthetic process"/>
    <property type="evidence" value="ECO:0007669"/>
    <property type="project" value="UniProtKB-UniRule"/>
</dbReference>
<dbReference type="CDD" id="cd00609">
    <property type="entry name" value="AAT_like"/>
    <property type="match status" value="1"/>
</dbReference>
<dbReference type="Gene3D" id="3.90.1150.10">
    <property type="entry name" value="Aspartate Aminotransferase, domain 1"/>
    <property type="match status" value="1"/>
</dbReference>
<dbReference type="Gene3D" id="3.40.640.10">
    <property type="entry name" value="Type I PLP-dependent aspartate aminotransferase-like (Major domain)"/>
    <property type="match status" value="1"/>
</dbReference>
<dbReference type="HAMAP" id="MF_01023">
    <property type="entry name" value="HisC_aminotrans_2"/>
    <property type="match status" value="1"/>
</dbReference>
<dbReference type="InterPro" id="IPR004839">
    <property type="entry name" value="Aminotransferase_I/II_large"/>
</dbReference>
<dbReference type="InterPro" id="IPR005861">
    <property type="entry name" value="HisP_aminotrans"/>
</dbReference>
<dbReference type="InterPro" id="IPR015424">
    <property type="entry name" value="PyrdxlP-dep_Trfase"/>
</dbReference>
<dbReference type="InterPro" id="IPR015421">
    <property type="entry name" value="PyrdxlP-dep_Trfase_major"/>
</dbReference>
<dbReference type="InterPro" id="IPR015422">
    <property type="entry name" value="PyrdxlP-dep_Trfase_small"/>
</dbReference>
<dbReference type="NCBIfam" id="TIGR01141">
    <property type="entry name" value="hisC"/>
    <property type="match status" value="1"/>
</dbReference>
<dbReference type="NCBIfam" id="NF002877">
    <property type="entry name" value="PRK03317.1"/>
    <property type="match status" value="1"/>
</dbReference>
<dbReference type="PANTHER" id="PTHR42885:SF2">
    <property type="entry name" value="HISTIDINOL-PHOSPHATE AMINOTRANSFERASE"/>
    <property type="match status" value="1"/>
</dbReference>
<dbReference type="PANTHER" id="PTHR42885">
    <property type="entry name" value="HISTIDINOL-PHOSPHATE AMINOTRANSFERASE-RELATED"/>
    <property type="match status" value="1"/>
</dbReference>
<dbReference type="Pfam" id="PF00155">
    <property type="entry name" value="Aminotran_1_2"/>
    <property type="match status" value="1"/>
</dbReference>
<dbReference type="SUPFAM" id="SSF53383">
    <property type="entry name" value="PLP-dependent transferases"/>
    <property type="match status" value="1"/>
</dbReference>
<feature type="chain" id="PRO_0000153394" description="Histidinol-phosphate aminotransferase">
    <location>
        <begin position="1"/>
        <end position="377"/>
    </location>
</feature>
<feature type="modified residue" description="N6-(pyridoxal phosphate)lysine" evidence="1">
    <location>
        <position position="230"/>
    </location>
</feature>
<organism>
    <name type="scientific">Mycobacterium leprae (strain TN)</name>
    <dbReference type="NCBI Taxonomy" id="272631"/>
    <lineage>
        <taxon>Bacteria</taxon>
        <taxon>Bacillati</taxon>
        <taxon>Actinomycetota</taxon>
        <taxon>Actinomycetes</taxon>
        <taxon>Mycobacteriales</taxon>
        <taxon>Mycobacteriaceae</taxon>
        <taxon>Mycobacterium</taxon>
    </lineage>
</organism>